<name>ERPA_XANCB</name>
<protein>
    <recommendedName>
        <fullName evidence="1">Iron-sulfur cluster insertion protein ErpA</fullName>
    </recommendedName>
</protein>
<dbReference type="EMBL" id="AM920689">
    <property type="protein sequence ID" value="CAP49850.1"/>
    <property type="molecule type" value="Genomic_DNA"/>
</dbReference>
<dbReference type="SMR" id="B0RN15"/>
<dbReference type="KEGG" id="xca:xcc-b100_0516"/>
<dbReference type="HOGENOM" id="CLU_069054_5_3_6"/>
<dbReference type="Proteomes" id="UP000001188">
    <property type="component" value="Chromosome"/>
</dbReference>
<dbReference type="GO" id="GO:0005829">
    <property type="term" value="C:cytosol"/>
    <property type="evidence" value="ECO:0007669"/>
    <property type="project" value="TreeGrafter"/>
</dbReference>
<dbReference type="GO" id="GO:0051537">
    <property type="term" value="F:2 iron, 2 sulfur cluster binding"/>
    <property type="evidence" value="ECO:0007669"/>
    <property type="project" value="UniProtKB-ARBA"/>
</dbReference>
<dbReference type="GO" id="GO:0051539">
    <property type="term" value="F:4 iron, 4 sulfur cluster binding"/>
    <property type="evidence" value="ECO:0007669"/>
    <property type="project" value="TreeGrafter"/>
</dbReference>
<dbReference type="GO" id="GO:0005506">
    <property type="term" value="F:iron ion binding"/>
    <property type="evidence" value="ECO:0007669"/>
    <property type="project" value="UniProtKB-UniRule"/>
</dbReference>
<dbReference type="GO" id="GO:0016226">
    <property type="term" value="P:iron-sulfur cluster assembly"/>
    <property type="evidence" value="ECO:0007669"/>
    <property type="project" value="UniProtKB-UniRule"/>
</dbReference>
<dbReference type="FunFam" id="2.60.300.12:FF:000002">
    <property type="entry name" value="Iron-sulfur cluster insertion protein ErpA"/>
    <property type="match status" value="1"/>
</dbReference>
<dbReference type="Gene3D" id="2.60.300.12">
    <property type="entry name" value="HesB-like domain"/>
    <property type="match status" value="1"/>
</dbReference>
<dbReference type="HAMAP" id="MF_01380">
    <property type="entry name" value="Fe_S_insert_ErpA"/>
    <property type="match status" value="1"/>
</dbReference>
<dbReference type="InterPro" id="IPR000361">
    <property type="entry name" value="FeS_biogenesis"/>
</dbReference>
<dbReference type="InterPro" id="IPR016092">
    <property type="entry name" value="FeS_cluster_insertion"/>
</dbReference>
<dbReference type="InterPro" id="IPR017870">
    <property type="entry name" value="FeS_cluster_insertion_CS"/>
</dbReference>
<dbReference type="InterPro" id="IPR023063">
    <property type="entry name" value="FeS_cluster_insertion_RrpA"/>
</dbReference>
<dbReference type="InterPro" id="IPR035903">
    <property type="entry name" value="HesB-like_dom_sf"/>
</dbReference>
<dbReference type="NCBIfam" id="TIGR00049">
    <property type="entry name" value="iron-sulfur cluster assembly accessory protein"/>
    <property type="match status" value="1"/>
</dbReference>
<dbReference type="NCBIfam" id="NF010147">
    <property type="entry name" value="PRK13623.1"/>
    <property type="match status" value="1"/>
</dbReference>
<dbReference type="PANTHER" id="PTHR43011">
    <property type="entry name" value="IRON-SULFUR CLUSTER ASSEMBLY 2 HOMOLOG, MITOCHONDRIAL"/>
    <property type="match status" value="1"/>
</dbReference>
<dbReference type="PANTHER" id="PTHR43011:SF1">
    <property type="entry name" value="IRON-SULFUR CLUSTER ASSEMBLY 2 HOMOLOG, MITOCHONDRIAL"/>
    <property type="match status" value="1"/>
</dbReference>
<dbReference type="Pfam" id="PF01521">
    <property type="entry name" value="Fe-S_biosyn"/>
    <property type="match status" value="1"/>
</dbReference>
<dbReference type="SUPFAM" id="SSF89360">
    <property type="entry name" value="HesB-like domain"/>
    <property type="match status" value="1"/>
</dbReference>
<dbReference type="PROSITE" id="PS01152">
    <property type="entry name" value="HESB"/>
    <property type="match status" value="1"/>
</dbReference>
<sequence length="128" mass="13634">MSTLVSLPTAAPAPDYQSIDRPLNFSNAAAAKVRELIQEEGNAELALRVYIQGGGCSGFQYGFEFDENRAEDDLAVATDGVTLLVDPLSLQYLMGAEVDYTESLTGAQFVIRNPNAKTTCGCGSSFSV</sequence>
<feature type="chain" id="PRO_1000144942" description="Iron-sulfur cluster insertion protein ErpA">
    <location>
        <begin position="1"/>
        <end position="128"/>
    </location>
</feature>
<feature type="binding site" evidence="1">
    <location>
        <position position="56"/>
    </location>
    <ligand>
        <name>iron-sulfur cluster</name>
        <dbReference type="ChEBI" id="CHEBI:30408"/>
    </ligand>
</feature>
<feature type="binding site" evidence="1">
    <location>
        <position position="120"/>
    </location>
    <ligand>
        <name>iron-sulfur cluster</name>
        <dbReference type="ChEBI" id="CHEBI:30408"/>
    </ligand>
</feature>
<feature type="binding site" evidence="1">
    <location>
        <position position="122"/>
    </location>
    <ligand>
        <name>iron-sulfur cluster</name>
        <dbReference type="ChEBI" id="CHEBI:30408"/>
    </ligand>
</feature>
<proteinExistence type="inferred from homology"/>
<gene>
    <name evidence="1" type="primary">erpA</name>
    <name type="ordered locus">xcc-b100_0516</name>
</gene>
<comment type="function">
    <text evidence="1">Required for insertion of 4Fe-4S clusters for at least IspG.</text>
</comment>
<comment type="cofactor">
    <cofactor evidence="1">
        <name>iron-sulfur cluster</name>
        <dbReference type="ChEBI" id="CHEBI:30408"/>
    </cofactor>
    <text evidence="1">Binds 1 iron-sulfur cluster per subunit.</text>
</comment>
<comment type="subunit">
    <text evidence="1">Homodimer.</text>
</comment>
<comment type="similarity">
    <text evidence="1">Belongs to the HesB/IscA family.</text>
</comment>
<accession>B0RN15</accession>
<organism>
    <name type="scientific">Xanthomonas campestris pv. campestris (strain B100)</name>
    <dbReference type="NCBI Taxonomy" id="509169"/>
    <lineage>
        <taxon>Bacteria</taxon>
        <taxon>Pseudomonadati</taxon>
        <taxon>Pseudomonadota</taxon>
        <taxon>Gammaproteobacteria</taxon>
        <taxon>Lysobacterales</taxon>
        <taxon>Lysobacteraceae</taxon>
        <taxon>Xanthomonas</taxon>
    </lineage>
</organism>
<evidence type="ECO:0000255" key="1">
    <source>
        <dbReference type="HAMAP-Rule" id="MF_01380"/>
    </source>
</evidence>
<keyword id="KW-0408">Iron</keyword>
<keyword id="KW-0411">Iron-sulfur</keyword>
<keyword id="KW-0479">Metal-binding</keyword>
<reference key="1">
    <citation type="journal article" date="2008" name="J. Biotechnol.">
        <title>The genome of Xanthomonas campestris pv. campestris B100 and its use for the reconstruction of metabolic pathways involved in xanthan biosynthesis.</title>
        <authorList>
            <person name="Vorhoelter F.-J."/>
            <person name="Schneiker S."/>
            <person name="Goesmann A."/>
            <person name="Krause L."/>
            <person name="Bekel T."/>
            <person name="Kaiser O."/>
            <person name="Linke B."/>
            <person name="Patschkowski T."/>
            <person name="Rueckert C."/>
            <person name="Schmid J."/>
            <person name="Sidhu V.K."/>
            <person name="Sieber V."/>
            <person name="Tauch A."/>
            <person name="Watt S.A."/>
            <person name="Weisshaar B."/>
            <person name="Becker A."/>
            <person name="Niehaus K."/>
            <person name="Puehler A."/>
        </authorList>
    </citation>
    <scope>NUCLEOTIDE SEQUENCE [LARGE SCALE GENOMIC DNA]</scope>
    <source>
        <strain>B100</strain>
    </source>
</reference>